<organism>
    <name type="scientific">Methylobacterium sp. (strain 4-46)</name>
    <dbReference type="NCBI Taxonomy" id="426117"/>
    <lineage>
        <taxon>Bacteria</taxon>
        <taxon>Pseudomonadati</taxon>
        <taxon>Pseudomonadota</taxon>
        <taxon>Alphaproteobacteria</taxon>
        <taxon>Hyphomicrobiales</taxon>
        <taxon>Methylobacteriaceae</taxon>
        <taxon>Methylobacterium</taxon>
    </lineage>
</organism>
<accession>B0UI81</accession>
<comment type="catalytic activity">
    <reaction evidence="1">
        <text>tRNA(Arg) + L-arginine + ATP = L-arginyl-tRNA(Arg) + AMP + diphosphate</text>
        <dbReference type="Rhea" id="RHEA:20301"/>
        <dbReference type="Rhea" id="RHEA-COMP:9658"/>
        <dbReference type="Rhea" id="RHEA-COMP:9673"/>
        <dbReference type="ChEBI" id="CHEBI:30616"/>
        <dbReference type="ChEBI" id="CHEBI:32682"/>
        <dbReference type="ChEBI" id="CHEBI:33019"/>
        <dbReference type="ChEBI" id="CHEBI:78442"/>
        <dbReference type="ChEBI" id="CHEBI:78513"/>
        <dbReference type="ChEBI" id="CHEBI:456215"/>
        <dbReference type="EC" id="6.1.1.19"/>
    </reaction>
</comment>
<comment type="subunit">
    <text evidence="1">Monomer.</text>
</comment>
<comment type="subcellular location">
    <subcellularLocation>
        <location evidence="1">Cytoplasm</location>
    </subcellularLocation>
</comment>
<comment type="similarity">
    <text evidence="1">Belongs to the class-I aminoacyl-tRNA synthetase family.</text>
</comment>
<gene>
    <name evidence="1" type="primary">argS</name>
    <name type="ordered locus">M446_2480</name>
</gene>
<evidence type="ECO:0000255" key="1">
    <source>
        <dbReference type="HAMAP-Rule" id="MF_00123"/>
    </source>
</evidence>
<protein>
    <recommendedName>
        <fullName evidence="1">Arginine--tRNA ligase</fullName>
        <ecNumber evidence="1">6.1.1.19</ecNumber>
    </recommendedName>
    <alternativeName>
        <fullName evidence="1">Arginyl-tRNA synthetase</fullName>
        <shortName evidence="1">ArgRS</shortName>
    </alternativeName>
</protein>
<keyword id="KW-0030">Aminoacyl-tRNA synthetase</keyword>
<keyword id="KW-0067">ATP-binding</keyword>
<keyword id="KW-0963">Cytoplasm</keyword>
<keyword id="KW-0436">Ligase</keyword>
<keyword id="KW-0547">Nucleotide-binding</keyword>
<keyword id="KW-0648">Protein biosynthesis</keyword>
<name>SYR_METS4</name>
<proteinExistence type="inferred from homology"/>
<dbReference type="EC" id="6.1.1.19" evidence="1"/>
<dbReference type="EMBL" id="CP000943">
    <property type="protein sequence ID" value="ACA16932.1"/>
    <property type="molecule type" value="Genomic_DNA"/>
</dbReference>
<dbReference type="RefSeq" id="WP_012332339.1">
    <property type="nucleotide sequence ID" value="NC_010511.1"/>
</dbReference>
<dbReference type="SMR" id="B0UI81"/>
<dbReference type="STRING" id="426117.M446_2480"/>
<dbReference type="KEGG" id="met:M446_2480"/>
<dbReference type="eggNOG" id="COG0018">
    <property type="taxonomic scope" value="Bacteria"/>
</dbReference>
<dbReference type="HOGENOM" id="CLU_006406_0_1_5"/>
<dbReference type="GO" id="GO:0005737">
    <property type="term" value="C:cytoplasm"/>
    <property type="evidence" value="ECO:0007669"/>
    <property type="project" value="UniProtKB-SubCell"/>
</dbReference>
<dbReference type="GO" id="GO:0004814">
    <property type="term" value="F:arginine-tRNA ligase activity"/>
    <property type="evidence" value="ECO:0007669"/>
    <property type="project" value="UniProtKB-UniRule"/>
</dbReference>
<dbReference type="GO" id="GO:0005524">
    <property type="term" value="F:ATP binding"/>
    <property type="evidence" value="ECO:0007669"/>
    <property type="project" value="UniProtKB-UniRule"/>
</dbReference>
<dbReference type="GO" id="GO:0006420">
    <property type="term" value="P:arginyl-tRNA aminoacylation"/>
    <property type="evidence" value="ECO:0007669"/>
    <property type="project" value="UniProtKB-UniRule"/>
</dbReference>
<dbReference type="CDD" id="cd00671">
    <property type="entry name" value="ArgRS_core"/>
    <property type="match status" value="1"/>
</dbReference>
<dbReference type="FunFam" id="1.10.730.10:FF:000008">
    <property type="entry name" value="Arginine--tRNA ligase"/>
    <property type="match status" value="1"/>
</dbReference>
<dbReference type="Gene3D" id="3.30.1360.70">
    <property type="entry name" value="Arginyl tRNA synthetase N-terminal domain"/>
    <property type="match status" value="1"/>
</dbReference>
<dbReference type="Gene3D" id="3.40.50.620">
    <property type="entry name" value="HUPs"/>
    <property type="match status" value="1"/>
</dbReference>
<dbReference type="Gene3D" id="1.10.730.10">
    <property type="entry name" value="Isoleucyl-tRNA Synthetase, Domain 1"/>
    <property type="match status" value="1"/>
</dbReference>
<dbReference type="HAMAP" id="MF_00123">
    <property type="entry name" value="Arg_tRNA_synth"/>
    <property type="match status" value="1"/>
</dbReference>
<dbReference type="InterPro" id="IPR001412">
    <property type="entry name" value="aa-tRNA-synth_I_CS"/>
</dbReference>
<dbReference type="InterPro" id="IPR001278">
    <property type="entry name" value="Arg-tRNA-ligase"/>
</dbReference>
<dbReference type="InterPro" id="IPR005148">
    <property type="entry name" value="Arg-tRNA-synth_N"/>
</dbReference>
<dbReference type="InterPro" id="IPR036695">
    <property type="entry name" value="Arg-tRNA-synth_N_sf"/>
</dbReference>
<dbReference type="InterPro" id="IPR035684">
    <property type="entry name" value="ArgRS_core"/>
</dbReference>
<dbReference type="InterPro" id="IPR008909">
    <property type="entry name" value="DALR_anticod-bd"/>
</dbReference>
<dbReference type="InterPro" id="IPR014729">
    <property type="entry name" value="Rossmann-like_a/b/a_fold"/>
</dbReference>
<dbReference type="InterPro" id="IPR009080">
    <property type="entry name" value="tRNAsynth_Ia_anticodon-bd"/>
</dbReference>
<dbReference type="NCBIfam" id="TIGR00456">
    <property type="entry name" value="argS"/>
    <property type="match status" value="1"/>
</dbReference>
<dbReference type="PANTHER" id="PTHR11956:SF5">
    <property type="entry name" value="ARGININE--TRNA LIGASE, CYTOPLASMIC"/>
    <property type="match status" value="1"/>
</dbReference>
<dbReference type="PANTHER" id="PTHR11956">
    <property type="entry name" value="ARGINYL-TRNA SYNTHETASE"/>
    <property type="match status" value="1"/>
</dbReference>
<dbReference type="Pfam" id="PF03485">
    <property type="entry name" value="Arg_tRNA_synt_N"/>
    <property type="match status" value="1"/>
</dbReference>
<dbReference type="Pfam" id="PF05746">
    <property type="entry name" value="DALR_1"/>
    <property type="match status" value="1"/>
</dbReference>
<dbReference type="Pfam" id="PF00750">
    <property type="entry name" value="tRNA-synt_1d"/>
    <property type="match status" value="2"/>
</dbReference>
<dbReference type="PRINTS" id="PR01038">
    <property type="entry name" value="TRNASYNTHARG"/>
</dbReference>
<dbReference type="SMART" id="SM01016">
    <property type="entry name" value="Arg_tRNA_synt_N"/>
    <property type="match status" value="1"/>
</dbReference>
<dbReference type="SMART" id="SM00836">
    <property type="entry name" value="DALR_1"/>
    <property type="match status" value="1"/>
</dbReference>
<dbReference type="SUPFAM" id="SSF47323">
    <property type="entry name" value="Anticodon-binding domain of a subclass of class I aminoacyl-tRNA synthetases"/>
    <property type="match status" value="1"/>
</dbReference>
<dbReference type="SUPFAM" id="SSF55190">
    <property type="entry name" value="Arginyl-tRNA synthetase (ArgRS), N-terminal 'additional' domain"/>
    <property type="match status" value="1"/>
</dbReference>
<dbReference type="SUPFAM" id="SSF52374">
    <property type="entry name" value="Nucleotidylyl transferase"/>
    <property type="match status" value="1"/>
</dbReference>
<dbReference type="PROSITE" id="PS00178">
    <property type="entry name" value="AA_TRNA_LIGASE_I"/>
    <property type="match status" value="1"/>
</dbReference>
<reference key="1">
    <citation type="submission" date="2008-02" db="EMBL/GenBank/DDBJ databases">
        <title>Complete sequence of chromosome of Methylobacterium sp. 4-46.</title>
        <authorList>
            <consortium name="US DOE Joint Genome Institute"/>
            <person name="Copeland A."/>
            <person name="Lucas S."/>
            <person name="Lapidus A."/>
            <person name="Glavina del Rio T."/>
            <person name="Dalin E."/>
            <person name="Tice H."/>
            <person name="Bruce D."/>
            <person name="Goodwin L."/>
            <person name="Pitluck S."/>
            <person name="Chertkov O."/>
            <person name="Brettin T."/>
            <person name="Detter J.C."/>
            <person name="Han C."/>
            <person name="Kuske C.R."/>
            <person name="Schmutz J."/>
            <person name="Larimer F."/>
            <person name="Land M."/>
            <person name="Hauser L."/>
            <person name="Kyrpides N."/>
            <person name="Ivanova N."/>
            <person name="Marx C.J."/>
            <person name="Richardson P."/>
        </authorList>
    </citation>
    <scope>NUCLEOTIDE SEQUENCE [LARGE SCALE GENOMIC DNA]</scope>
    <source>
        <strain>4-46</strain>
    </source>
</reference>
<sequence length="586" mass="63543">MNIFAAFEERIGEALATLTRAGQLPEGLDLGRVVVEPPRDPGHGDLATNAALVLAKEARTNPKALAELLAAELRQDPRVTEASVAGPGFLNLRLAPEVFAEVVRAALASGEAFGRGARRPGLVNVEYVSANPTGPMHVGHGRGAVFGDALANLLAASGREVVREYYINDAGAQVDVLARSAYLRYREALGDAIGAIPEGLYPGDYLKPVGRRLAETHGRALLREPESAWLPVVRDFAIAAMMDLIRDDLAALGIRHDVFFSERTLQGGGDGGAVGALIAELREKGLVYVGRLPPPKGQLPEDWEDRDQTLFRSTAFGDDIDRPLLKSDGTYTYFASDIAYHASKVARGATDLIDVLGADHGGYVKRMQAAVRAVSDGRASLDVKLCQLVRLLRGGEPVKMSKRAGEFVTLREVIDEVGRDPVRFMMLYRKNDATLDFDLAKVVEQSKDNPVFYVQYAHARTASVFRQAREAFPGEDLSPQALAGADLSLLRDSGEADIMRLVAQYPRVIEAAGSAHEPHRLAFYLYELASAFHSFWNKGKDLPQLRFVNQTDRKSTLSRLALVAALRGVLASGLGILGVTAPDEMR</sequence>
<feature type="chain" id="PRO_1000198923" description="Arginine--tRNA ligase">
    <location>
        <begin position="1"/>
        <end position="586"/>
    </location>
</feature>
<feature type="short sequence motif" description="'HIGH' region">
    <location>
        <begin position="130"/>
        <end position="140"/>
    </location>
</feature>